<sequence length="244" mass="27428">MATWKFIIRSVLFFLDLAMLLAALALIAVGFWMGYDSSFDTDLKNVIYKYDDPKSLADAKFNIRVWLIVVFWSIIGLSLGAVVTAVLGMISSVWPKRKGFMITYLVLIIVLVSLEIGCGVAVLVRRNSLHDNTNSLIDAMYTTNSVNDLKIIQDKYNCCGIENSLFNVMYCGPMSQKPHCDVAVFDSVDNTMMISGIILLVILILQTIAIILPVPILISRKKTYKYSYEPRVTQLADITEDTRF</sequence>
<name>TSP1_CAEEL</name>
<reference key="1">
    <citation type="journal article" date="1994" name="Nature">
        <title>2.2 Mb of contiguous nucleotide sequence from chromosome III of C. elegans.</title>
        <authorList>
            <person name="Wilson R."/>
            <person name="Ainscough R."/>
            <person name="Anderson K."/>
            <person name="Baynes C."/>
            <person name="Berks M."/>
            <person name="Bonfield J."/>
            <person name="Burton J."/>
            <person name="Connell M."/>
            <person name="Copsey T."/>
            <person name="Cooper J."/>
            <person name="Coulson A."/>
            <person name="Craxton M."/>
            <person name="Dear S."/>
            <person name="Du Z."/>
            <person name="Durbin R."/>
            <person name="Favello A."/>
            <person name="Fraser A."/>
            <person name="Fulton L."/>
            <person name="Gardner A."/>
            <person name="Green P."/>
            <person name="Hawkins T."/>
            <person name="Hillier L."/>
            <person name="Jier M."/>
            <person name="Johnston L."/>
            <person name="Jones M."/>
            <person name="Kershaw J."/>
            <person name="Kirsten J."/>
            <person name="Laisster N."/>
            <person name="Latreille P."/>
            <person name="Lightning J."/>
            <person name="Lloyd C."/>
            <person name="Mortimore B."/>
            <person name="O'Callaghan M."/>
            <person name="Parsons J."/>
            <person name="Percy C."/>
            <person name="Rifken L."/>
            <person name="Roopra A."/>
            <person name="Saunders D."/>
            <person name="Shownkeen R."/>
            <person name="Sims M."/>
            <person name="Smaldon N."/>
            <person name="Smith A."/>
            <person name="Smith M."/>
            <person name="Sonnhammer E."/>
            <person name="Staden R."/>
            <person name="Sulston J."/>
            <person name="Thierry-Mieg J."/>
            <person name="Thomas K."/>
            <person name="Vaudin M."/>
            <person name="Vaughan K."/>
            <person name="Waterston R."/>
            <person name="Watson A."/>
            <person name="Weinstock L."/>
            <person name="Wilkinson-Sproat J."/>
            <person name="Wohldman P."/>
        </authorList>
    </citation>
    <scope>NUCLEOTIDE SEQUENCE [LARGE SCALE GENOMIC DNA]</scope>
    <source>
        <strain>Bristol N2</strain>
    </source>
</reference>
<reference key="2">
    <citation type="journal article" date="1998" name="Science">
        <title>Genome sequence of the nematode C. elegans: a platform for investigating biology.</title>
        <authorList>
            <consortium name="The C. elegans sequencing consortium"/>
        </authorList>
    </citation>
    <scope>NUCLEOTIDE SEQUENCE [LARGE SCALE GENOMIC DNA]</scope>
    <source>
        <strain>Bristol N2</strain>
    </source>
</reference>
<accession>P34285</accession>
<evidence type="ECO:0000255" key="1"/>
<evidence type="ECO:0000305" key="2"/>
<organism>
    <name type="scientific">Caenorhabditis elegans</name>
    <dbReference type="NCBI Taxonomy" id="6239"/>
    <lineage>
        <taxon>Eukaryota</taxon>
        <taxon>Metazoa</taxon>
        <taxon>Ecdysozoa</taxon>
        <taxon>Nematoda</taxon>
        <taxon>Chromadorea</taxon>
        <taxon>Rhabditida</taxon>
        <taxon>Rhabditina</taxon>
        <taxon>Rhabditomorpha</taxon>
        <taxon>Rhabditoidea</taxon>
        <taxon>Rhabditidae</taxon>
        <taxon>Peloderinae</taxon>
        <taxon>Caenorhabditis</taxon>
    </lineage>
</organism>
<comment type="subcellular location">
    <subcellularLocation>
        <location evidence="2">Membrane</location>
        <topology evidence="2">Multi-pass membrane protein</topology>
    </subcellularLocation>
</comment>
<comment type="similarity">
    <text evidence="2">Belongs to the tetraspanin (TM4SF) family.</text>
</comment>
<proteinExistence type="inferred from homology"/>
<dbReference type="EMBL" id="FO080288">
    <property type="protein sequence ID" value="CCD62634.1"/>
    <property type="molecule type" value="Genomic_DNA"/>
</dbReference>
<dbReference type="PIR" id="S44610">
    <property type="entry name" value="S44610"/>
</dbReference>
<dbReference type="RefSeq" id="NP_498804.1">
    <property type="nucleotide sequence ID" value="NM_066403.7"/>
</dbReference>
<dbReference type="SMR" id="P34285"/>
<dbReference type="FunCoup" id="P34285">
    <property type="interactions" value="2"/>
</dbReference>
<dbReference type="STRING" id="6239.C02F5.8.1"/>
<dbReference type="PaxDb" id="6239-C02F5.8"/>
<dbReference type="PeptideAtlas" id="P34285"/>
<dbReference type="EnsemblMetazoa" id="C02F5.8.1">
    <property type="protein sequence ID" value="C02F5.8.1"/>
    <property type="gene ID" value="WBGene00006627"/>
</dbReference>
<dbReference type="GeneID" id="192096"/>
<dbReference type="KEGG" id="cel:CELE_C02F5.8"/>
<dbReference type="UCSC" id="C02F5.8">
    <property type="organism name" value="c. elegans"/>
</dbReference>
<dbReference type="AGR" id="WB:WBGene00006627"/>
<dbReference type="CTD" id="192096"/>
<dbReference type="WormBase" id="C02F5.8">
    <property type="protein sequence ID" value="CE00044"/>
    <property type="gene ID" value="WBGene00006627"/>
    <property type="gene designation" value="tsp-1"/>
</dbReference>
<dbReference type="eggNOG" id="KOG3882">
    <property type="taxonomic scope" value="Eukaryota"/>
</dbReference>
<dbReference type="GeneTree" id="ENSGT00940000165843"/>
<dbReference type="HOGENOM" id="CLU_099570_0_0_1"/>
<dbReference type="InParanoid" id="P34285"/>
<dbReference type="OMA" id="KFNIRVW"/>
<dbReference type="OrthoDB" id="5870230at2759"/>
<dbReference type="PhylomeDB" id="P34285"/>
<dbReference type="PRO" id="PR:P34285"/>
<dbReference type="Proteomes" id="UP000001940">
    <property type="component" value="Chromosome III"/>
</dbReference>
<dbReference type="Bgee" id="WBGene00006627">
    <property type="expression patterns" value="Expressed in pharyngeal muscle cell (C elegans) and 3 other cell types or tissues"/>
</dbReference>
<dbReference type="GO" id="GO:0005886">
    <property type="term" value="C:plasma membrane"/>
    <property type="evidence" value="ECO:0000318"/>
    <property type="project" value="GO_Central"/>
</dbReference>
<dbReference type="GO" id="GO:0045087">
    <property type="term" value="P:innate immune response"/>
    <property type="evidence" value="ECO:0007007"/>
    <property type="project" value="WormBase"/>
</dbReference>
<dbReference type="InterPro" id="IPR018499">
    <property type="entry name" value="Tetraspanin/Peripherin"/>
</dbReference>
<dbReference type="PANTHER" id="PTHR19282">
    <property type="entry name" value="TETRASPANIN"/>
    <property type="match status" value="1"/>
</dbReference>
<dbReference type="PANTHER" id="PTHR19282:SF557">
    <property type="entry name" value="TETRASPANIN-1"/>
    <property type="match status" value="1"/>
</dbReference>
<dbReference type="Pfam" id="PF00335">
    <property type="entry name" value="Tetraspanin"/>
    <property type="match status" value="1"/>
</dbReference>
<dbReference type="PRINTS" id="PR00259">
    <property type="entry name" value="TMFOUR"/>
</dbReference>
<gene>
    <name type="primary">tsp-1</name>
    <name type="ORF">C02F5.8</name>
</gene>
<keyword id="KW-0472">Membrane</keyword>
<keyword id="KW-1185">Reference proteome</keyword>
<keyword id="KW-0812">Transmembrane</keyword>
<keyword id="KW-1133">Transmembrane helix</keyword>
<protein>
    <recommendedName>
        <fullName>Tetraspanin-1</fullName>
    </recommendedName>
</protein>
<feature type="chain" id="PRO_0000219293" description="Tetraspanin-1">
    <location>
        <begin position="1"/>
        <end position="244"/>
    </location>
</feature>
<feature type="transmembrane region" description="Helical" evidence="1">
    <location>
        <begin position="11"/>
        <end position="31"/>
    </location>
</feature>
<feature type="transmembrane region" description="Helical" evidence="1">
    <location>
        <begin position="67"/>
        <end position="87"/>
    </location>
</feature>
<feature type="transmembrane region" description="Helical" evidence="1">
    <location>
        <begin position="104"/>
        <end position="124"/>
    </location>
</feature>
<feature type="transmembrane region" description="Helical" evidence="1">
    <location>
        <begin position="198"/>
        <end position="218"/>
    </location>
</feature>